<evidence type="ECO:0000255" key="1">
    <source>
        <dbReference type="HAMAP-Rule" id="MF_01333"/>
    </source>
</evidence>
<evidence type="ECO:0000305" key="2"/>
<comment type="function">
    <text evidence="1">This is one of the proteins that bind and probably mediate the attachment of the 5S RNA into the large ribosomal subunit, where it forms part of the central protuberance. In the 70S ribosome it contacts protein S13 of the 30S subunit (bridge B1b), connecting the 2 subunits; this bridge is implicated in subunit movement. Contacts the P site tRNA; the 5S rRNA and some of its associated proteins might help stabilize positioning of ribosome-bound tRNAs.</text>
</comment>
<comment type="subunit">
    <text evidence="1">Part of the 50S ribosomal subunit; part of the 5S rRNA/L5/L18/L25 subcomplex. Contacts the 5S rRNA and the P site tRNA. Forms a bridge to the 30S subunit in the 70S ribosome.</text>
</comment>
<comment type="similarity">
    <text evidence="1">Belongs to the universal ribosomal protein uL5 family.</text>
</comment>
<sequence length="179" mass="20473">MARLKEIYRKEIAPKLKEELKLSNVMEVPRVTKITLNMGLGEAIGDKKVIEHAVADLEKITGQKVVVTYARKSIAGFKVREGWPIGVKVTLRRDRMYEFLDRLLSISLPRVRDFRGLNAKSFDGRGNYSMGVKEQIIFPEIDYDKIDALRGLDITLTTTAKNDDEGRALLRAFKFPFRN</sequence>
<organism>
    <name type="scientific">Pseudomonas savastanoi pv. phaseolicola (strain 1448A / Race 6)</name>
    <name type="common">Pseudomonas syringae pv. phaseolicola (strain 1448A / Race 6)</name>
    <dbReference type="NCBI Taxonomy" id="264730"/>
    <lineage>
        <taxon>Bacteria</taxon>
        <taxon>Pseudomonadati</taxon>
        <taxon>Pseudomonadota</taxon>
        <taxon>Gammaproteobacteria</taxon>
        <taxon>Pseudomonadales</taxon>
        <taxon>Pseudomonadaceae</taxon>
        <taxon>Pseudomonas</taxon>
    </lineage>
</organism>
<gene>
    <name evidence="1" type="primary">rplE</name>
    <name type="ordered locus">PSPPH_4580</name>
</gene>
<protein>
    <recommendedName>
        <fullName evidence="1">Large ribosomal subunit protein uL5</fullName>
    </recommendedName>
    <alternativeName>
        <fullName evidence="2">50S ribosomal protein L5</fullName>
    </alternativeName>
</protein>
<keyword id="KW-0687">Ribonucleoprotein</keyword>
<keyword id="KW-0689">Ribosomal protein</keyword>
<keyword id="KW-0694">RNA-binding</keyword>
<keyword id="KW-0699">rRNA-binding</keyword>
<keyword id="KW-0820">tRNA-binding</keyword>
<feature type="chain" id="PRO_0000243044" description="Large ribosomal subunit protein uL5">
    <location>
        <begin position="1"/>
        <end position="179"/>
    </location>
</feature>
<dbReference type="EMBL" id="CP000058">
    <property type="protein sequence ID" value="AAZ35011.1"/>
    <property type="molecule type" value="Genomic_DNA"/>
</dbReference>
<dbReference type="RefSeq" id="WP_002555477.1">
    <property type="nucleotide sequence ID" value="NC_005773.3"/>
</dbReference>
<dbReference type="SMR" id="Q48D48"/>
<dbReference type="GeneID" id="96221018"/>
<dbReference type="KEGG" id="psp:PSPPH_4580"/>
<dbReference type="eggNOG" id="COG0094">
    <property type="taxonomic scope" value="Bacteria"/>
</dbReference>
<dbReference type="HOGENOM" id="CLU_061015_2_1_6"/>
<dbReference type="Proteomes" id="UP000000551">
    <property type="component" value="Chromosome"/>
</dbReference>
<dbReference type="GO" id="GO:1990904">
    <property type="term" value="C:ribonucleoprotein complex"/>
    <property type="evidence" value="ECO:0007669"/>
    <property type="project" value="UniProtKB-KW"/>
</dbReference>
<dbReference type="GO" id="GO:0005840">
    <property type="term" value="C:ribosome"/>
    <property type="evidence" value="ECO:0007669"/>
    <property type="project" value="UniProtKB-KW"/>
</dbReference>
<dbReference type="GO" id="GO:0019843">
    <property type="term" value="F:rRNA binding"/>
    <property type="evidence" value="ECO:0007669"/>
    <property type="project" value="UniProtKB-UniRule"/>
</dbReference>
<dbReference type="GO" id="GO:0003735">
    <property type="term" value="F:structural constituent of ribosome"/>
    <property type="evidence" value="ECO:0007669"/>
    <property type="project" value="InterPro"/>
</dbReference>
<dbReference type="GO" id="GO:0000049">
    <property type="term" value="F:tRNA binding"/>
    <property type="evidence" value="ECO:0007669"/>
    <property type="project" value="UniProtKB-UniRule"/>
</dbReference>
<dbReference type="GO" id="GO:0006412">
    <property type="term" value="P:translation"/>
    <property type="evidence" value="ECO:0007669"/>
    <property type="project" value="UniProtKB-UniRule"/>
</dbReference>
<dbReference type="FunFam" id="3.30.1440.10:FF:000001">
    <property type="entry name" value="50S ribosomal protein L5"/>
    <property type="match status" value="1"/>
</dbReference>
<dbReference type="Gene3D" id="3.30.1440.10">
    <property type="match status" value="1"/>
</dbReference>
<dbReference type="HAMAP" id="MF_01333_B">
    <property type="entry name" value="Ribosomal_uL5_B"/>
    <property type="match status" value="1"/>
</dbReference>
<dbReference type="InterPro" id="IPR002132">
    <property type="entry name" value="Ribosomal_uL5"/>
</dbReference>
<dbReference type="InterPro" id="IPR020930">
    <property type="entry name" value="Ribosomal_uL5_bac-type"/>
</dbReference>
<dbReference type="InterPro" id="IPR031309">
    <property type="entry name" value="Ribosomal_uL5_C"/>
</dbReference>
<dbReference type="InterPro" id="IPR020929">
    <property type="entry name" value="Ribosomal_uL5_CS"/>
</dbReference>
<dbReference type="InterPro" id="IPR022803">
    <property type="entry name" value="Ribosomal_uL5_dom_sf"/>
</dbReference>
<dbReference type="InterPro" id="IPR031310">
    <property type="entry name" value="Ribosomal_uL5_N"/>
</dbReference>
<dbReference type="NCBIfam" id="NF000585">
    <property type="entry name" value="PRK00010.1"/>
    <property type="match status" value="1"/>
</dbReference>
<dbReference type="PANTHER" id="PTHR11994">
    <property type="entry name" value="60S RIBOSOMAL PROTEIN L11-RELATED"/>
    <property type="match status" value="1"/>
</dbReference>
<dbReference type="Pfam" id="PF00281">
    <property type="entry name" value="Ribosomal_L5"/>
    <property type="match status" value="1"/>
</dbReference>
<dbReference type="Pfam" id="PF00673">
    <property type="entry name" value="Ribosomal_L5_C"/>
    <property type="match status" value="1"/>
</dbReference>
<dbReference type="PIRSF" id="PIRSF002161">
    <property type="entry name" value="Ribosomal_L5"/>
    <property type="match status" value="1"/>
</dbReference>
<dbReference type="SUPFAM" id="SSF55282">
    <property type="entry name" value="RL5-like"/>
    <property type="match status" value="1"/>
</dbReference>
<dbReference type="PROSITE" id="PS00358">
    <property type="entry name" value="RIBOSOMAL_L5"/>
    <property type="match status" value="1"/>
</dbReference>
<reference key="1">
    <citation type="journal article" date="2005" name="J. Bacteriol.">
        <title>Whole-genome sequence analysis of Pseudomonas syringae pv. phaseolicola 1448A reveals divergence among pathovars in genes involved in virulence and transposition.</title>
        <authorList>
            <person name="Joardar V."/>
            <person name="Lindeberg M."/>
            <person name="Jackson R.W."/>
            <person name="Selengut J."/>
            <person name="Dodson R."/>
            <person name="Brinkac L.M."/>
            <person name="Daugherty S.C."/>
            <person name="DeBoy R.T."/>
            <person name="Durkin A.S."/>
            <person name="Gwinn Giglio M."/>
            <person name="Madupu R."/>
            <person name="Nelson W.C."/>
            <person name="Rosovitz M.J."/>
            <person name="Sullivan S.A."/>
            <person name="Crabtree J."/>
            <person name="Creasy T."/>
            <person name="Davidsen T.M."/>
            <person name="Haft D.H."/>
            <person name="Zafar N."/>
            <person name="Zhou L."/>
            <person name="Halpin R."/>
            <person name="Holley T."/>
            <person name="Khouri H.M."/>
            <person name="Feldblyum T.V."/>
            <person name="White O."/>
            <person name="Fraser C.M."/>
            <person name="Chatterjee A.K."/>
            <person name="Cartinhour S."/>
            <person name="Schneider D."/>
            <person name="Mansfield J.W."/>
            <person name="Collmer A."/>
            <person name="Buell R."/>
        </authorList>
    </citation>
    <scope>NUCLEOTIDE SEQUENCE [LARGE SCALE GENOMIC DNA]</scope>
    <source>
        <strain>1448A / Race 6</strain>
    </source>
</reference>
<name>RL5_PSE14</name>
<accession>Q48D48</accession>
<proteinExistence type="inferred from homology"/>